<sequence length="440" mass="50579">MSEFSQTVPELVAWARKNDFSISLPVDRLSFLLAVATLNGERLDGEMSEGELVDAFRHVSDAFEQTSETIGVRANNAINDMVRQRLLNRFTSEQAEGNAIYRLTPLGIGITDYYIRQREFSTLRLSMQLSIVAGELKRAADAAEEGGDEFHWHRNVYAPLKYSVAEIFDSIDLTQRLMDEQQQQVKDDIAQLLNKDWRAAISSCELLLSETSGTLRELQDTLEAAGDKLQANLLRIQDATMTHDDLHFVDRLVFDLQSKLDRIISWGQQSIDLWIGYDRHVHKFIRTAIDMDKNRVFAQRLRQSVQTYFDEPWALTYANADRLLDMRDEEMALRDEEVTGELPEDLEYEEFNEIREQLAAIIEEQLAVYKTRQVPLDLGLVVREYLSQYPRARHFDVARIVIDQAVRLGVAQADFTGLPAKWQPINDYGAKVQAHVIDKY</sequence>
<gene>
    <name evidence="1" type="primary">mukF</name>
    <name type="ordered locus">SDY_2336</name>
</gene>
<organism>
    <name type="scientific">Shigella dysenteriae serotype 1 (strain Sd197)</name>
    <dbReference type="NCBI Taxonomy" id="300267"/>
    <lineage>
        <taxon>Bacteria</taxon>
        <taxon>Pseudomonadati</taxon>
        <taxon>Pseudomonadota</taxon>
        <taxon>Gammaproteobacteria</taxon>
        <taxon>Enterobacterales</taxon>
        <taxon>Enterobacteriaceae</taxon>
        <taxon>Shigella</taxon>
    </lineage>
</organism>
<feature type="chain" id="PRO_1000069941" description="Chromosome partition protein MukF">
    <location>
        <begin position="1"/>
        <end position="440"/>
    </location>
</feature>
<feature type="region of interest" description="Leucine-zipper">
    <location>
        <begin position="208"/>
        <end position="236"/>
    </location>
</feature>
<protein>
    <recommendedName>
        <fullName evidence="1">Chromosome partition protein MukF</fullName>
    </recommendedName>
</protein>
<reference key="1">
    <citation type="journal article" date="2005" name="Nucleic Acids Res.">
        <title>Genome dynamics and diversity of Shigella species, the etiologic agents of bacillary dysentery.</title>
        <authorList>
            <person name="Yang F."/>
            <person name="Yang J."/>
            <person name="Zhang X."/>
            <person name="Chen L."/>
            <person name="Jiang Y."/>
            <person name="Yan Y."/>
            <person name="Tang X."/>
            <person name="Wang J."/>
            <person name="Xiong Z."/>
            <person name="Dong J."/>
            <person name="Xue Y."/>
            <person name="Zhu Y."/>
            <person name="Xu X."/>
            <person name="Sun L."/>
            <person name="Chen S."/>
            <person name="Nie H."/>
            <person name="Peng J."/>
            <person name="Xu J."/>
            <person name="Wang Y."/>
            <person name="Yuan Z."/>
            <person name="Wen Y."/>
            <person name="Yao Z."/>
            <person name="Shen Y."/>
            <person name="Qiang B."/>
            <person name="Hou Y."/>
            <person name="Yu J."/>
            <person name="Jin Q."/>
        </authorList>
    </citation>
    <scope>NUCLEOTIDE SEQUENCE [LARGE SCALE GENOMIC DNA]</scope>
    <source>
        <strain>Sd197</strain>
    </source>
</reference>
<name>MUKF_SHIDS</name>
<dbReference type="EMBL" id="CP000034">
    <property type="protein sequence ID" value="ABB62413.1"/>
    <property type="molecule type" value="Genomic_DNA"/>
</dbReference>
<dbReference type="RefSeq" id="WP_001288850.1">
    <property type="nucleotide sequence ID" value="NC_007606.1"/>
</dbReference>
<dbReference type="RefSeq" id="YP_403904.1">
    <property type="nucleotide sequence ID" value="NC_007606.1"/>
</dbReference>
<dbReference type="SMR" id="Q32E42"/>
<dbReference type="STRING" id="300267.SDY_2336"/>
<dbReference type="EnsemblBacteria" id="ABB62413">
    <property type="protein sequence ID" value="ABB62413"/>
    <property type="gene ID" value="SDY_2336"/>
</dbReference>
<dbReference type="GeneID" id="93776493"/>
<dbReference type="KEGG" id="sdy:SDY_2336"/>
<dbReference type="PATRIC" id="fig|300267.13.peg.2820"/>
<dbReference type="HOGENOM" id="CLU_049853_0_0_6"/>
<dbReference type="Proteomes" id="UP000002716">
    <property type="component" value="Chromosome"/>
</dbReference>
<dbReference type="GO" id="GO:0005737">
    <property type="term" value="C:cytoplasm"/>
    <property type="evidence" value="ECO:0007669"/>
    <property type="project" value="UniProtKB-UniRule"/>
</dbReference>
<dbReference type="GO" id="GO:0009295">
    <property type="term" value="C:nucleoid"/>
    <property type="evidence" value="ECO:0007669"/>
    <property type="project" value="UniProtKB-SubCell"/>
</dbReference>
<dbReference type="GO" id="GO:0005509">
    <property type="term" value="F:calcium ion binding"/>
    <property type="evidence" value="ECO:0007669"/>
    <property type="project" value="UniProtKB-UniRule"/>
</dbReference>
<dbReference type="GO" id="GO:0051301">
    <property type="term" value="P:cell division"/>
    <property type="evidence" value="ECO:0007669"/>
    <property type="project" value="UniProtKB-KW"/>
</dbReference>
<dbReference type="GO" id="GO:0030261">
    <property type="term" value="P:chromosome condensation"/>
    <property type="evidence" value="ECO:0007669"/>
    <property type="project" value="UniProtKB-KW"/>
</dbReference>
<dbReference type="GO" id="GO:0007059">
    <property type="term" value="P:chromosome segregation"/>
    <property type="evidence" value="ECO:0007669"/>
    <property type="project" value="UniProtKB-UniRule"/>
</dbReference>
<dbReference type="GO" id="GO:0006260">
    <property type="term" value="P:DNA replication"/>
    <property type="evidence" value="ECO:0007669"/>
    <property type="project" value="UniProtKB-UniRule"/>
</dbReference>
<dbReference type="CDD" id="cd16337">
    <property type="entry name" value="MukF_C"/>
    <property type="match status" value="1"/>
</dbReference>
<dbReference type="CDD" id="cd16335">
    <property type="entry name" value="MukF_N"/>
    <property type="match status" value="1"/>
</dbReference>
<dbReference type="Gene3D" id="1.20.58.590">
    <property type="entry name" value="Chromosome partition protein MukF, middle domain"/>
    <property type="match status" value="1"/>
</dbReference>
<dbReference type="Gene3D" id="1.10.225.40">
    <property type="entry name" value="MukF, C-terminal domain"/>
    <property type="match status" value="1"/>
</dbReference>
<dbReference type="Gene3D" id="1.10.10.10">
    <property type="entry name" value="Winged helix-like DNA-binding domain superfamily/Winged helix DNA-binding domain"/>
    <property type="match status" value="1"/>
</dbReference>
<dbReference type="HAMAP" id="MF_01803">
    <property type="entry name" value="MukF"/>
    <property type="match status" value="1"/>
</dbReference>
<dbReference type="InterPro" id="IPR005582">
    <property type="entry name" value="Chromosome_partition_MukF"/>
</dbReference>
<dbReference type="InterPro" id="IPR033441">
    <property type="entry name" value="MukF_C"/>
</dbReference>
<dbReference type="InterPro" id="IPR038198">
    <property type="entry name" value="MukF_C_sf"/>
</dbReference>
<dbReference type="InterPro" id="IPR033440">
    <property type="entry name" value="MukF_M"/>
</dbReference>
<dbReference type="InterPro" id="IPR036141">
    <property type="entry name" value="MukF_M_sp"/>
</dbReference>
<dbReference type="InterPro" id="IPR033439">
    <property type="entry name" value="MukF_WHTH"/>
</dbReference>
<dbReference type="InterPro" id="IPR036388">
    <property type="entry name" value="WH-like_DNA-bd_sf"/>
</dbReference>
<dbReference type="InterPro" id="IPR036390">
    <property type="entry name" value="WH_DNA-bd_sf"/>
</dbReference>
<dbReference type="NCBIfam" id="NF003615">
    <property type="entry name" value="PRK05260.1"/>
    <property type="match status" value="1"/>
</dbReference>
<dbReference type="Pfam" id="PF03882">
    <property type="entry name" value="KicB"/>
    <property type="match status" value="1"/>
</dbReference>
<dbReference type="Pfam" id="PF17193">
    <property type="entry name" value="MukF_C"/>
    <property type="match status" value="1"/>
</dbReference>
<dbReference type="Pfam" id="PF17192">
    <property type="entry name" value="MukF_M"/>
    <property type="match status" value="1"/>
</dbReference>
<dbReference type="PIRSF" id="PIRSF018282">
    <property type="entry name" value="MukF"/>
    <property type="match status" value="1"/>
</dbReference>
<dbReference type="SUPFAM" id="SSF140570">
    <property type="entry name" value="MukF C-terminal domain-like"/>
    <property type="match status" value="1"/>
</dbReference>
<dbReference type="SUPFAM" id="SSF46785">
    <property type="entry name" value="Winged helix' DNA-binding domain"/>
    <property type="match status" value="1"/>
</dbReference>
<keyword id="KW-0106">Calcium</keyword>
<keyword id="KW-0131">Cell cycle</keyword>
<keyword id="KW-0132">Cell division</keyword>
<keyword id="KW-0159">Chromosome partition</keyword>
<keyword id="KW-0963">Cytoplasm</keyword>
<keyword id="KW-0226">DNA condensation</keyword>
<keyword id="KW-1185">Reference proteome</keyword>
<proteinExistence type="inferred from homology"/>
<accession>Q32E42</accession>
<comment type="function">
    <text evidence="1">Involved in chromosome condensation, segregation and cell cycle progression. May participate in facilitating chromosome segregation by condensation DNA from both sides of a centrally located replisome during cell division. Not required for mini-F plasmid partitioning. Probably acts via its interaction with MukB and MukE. Overexpression results in anucleate cells. It has a calcium binding activity.</text>
</comment>
<comment type="subunit">
    <text evidence="1">Interacts, and probably forms a ternary complex, with MukE and MukB via its C-terminal region. The complex formation is stimulated by calcium or magnesium. It is required for an interaction between MukE and MukB.</text>
</comment>
<comment type="subcellular location">
    <subcellularLocation>
        <location evidence="1">Cytoplasm</location>
        <location evidence="1">Nucleoid</location>
    </subcellularLocation>
    <text evidence="1">Restricted to the nucleoid region.</text>
</comment>
<comment type="similarity">
    <text evidence="1">Belongs to the MukF family.</text>
</comment>
<evidence type="ECO:0000255" key="1">
    <source>
        <dbReference type="HAMAP-Rule" id="MF_01803"/>
    </source>
</evidence>